<accession>P85197</accession>
<accession>A7XZD4</accession>
<sequence length="180" mass="19781">MMKLIVLAAFIGVCAGGALPGYVAPQYRFAPDYYPEGRYRPNVEGNAAVLRSDSEVSEQGFRYAYETENGIRGEATGVESDGIQSQGSFAYTGADGQQYSVTYTADGNGFQPQGAHFPTPPPVPEAIVRSLQENARDEAAGIFDDGSYHEAKYDPASIAAKAQHQYHYQPNTRYFPRYHY</sequence>
<dbReference type="EMBL" id="EU106114">
    <property type="protein sequence ID" value="ABU88846.1"/>
    <property type="molecule type" value="Genomic_DNA"/>
</dbReference>
<dbReference type="GO" id="GO:0062129">
    <property type="term" value="C:chitin-based extracellular matrix"/>
    <property type="evidence" value="ECO:0007669"/>
    <property type="project" value="TreeGrafter"/>
</dbReference>
<dbReference type="GO" id="GO:0008010">
    <property type="term" value="F:structural constituent of chitin-based larval cuticle"/>
    <property type="evidence" value="ECO:0007669"/>
    <property type="project" value="TreeGrafter"/>
</dbReference>
<dbReference type="InterPro" id="IPR031311">
    <property type="entry name" value="CHIT_BIND_RR_consensus"/>
</dbReference>
<dbReference type="InterPro" id="IPR050468">
    <property type="entry name" value="Cuticle_Struct_Prot"/>
</dbReference>
<dbReference type="InterPro" id="IPR000618">
    <property type="entry name" value="Insect_cuticle"/>
</dbReference>
<dbReference type="PANTHER" id="PTHR10380">
    <property type="entry name" value="CUTICLE PROTEIN"/>
    <property type="match status" value="1"/>
</dbReference>
<dbReference type="PANTHER" id="PTHR10380:SF173">
    <property type="entry name" value="CUTICULAR PROTEIN 47EF, ISOFORM C-RELATED"/>
    <property type="match status" value="1"/>
</dbReference>
<dbReference type="Pfam" id="PF00379">
    <property type="entry name" value="Chitin_bind_4"/>
    <property type="match status" value="1"/>
</dbReference>
<dbReference type="PRINTS" id="PR00947">
    <property type="entry name" value="CUTICLE"/>
</dbReference>
<dbReference type="PROSITE" id="PS00233">
    <property type="entry name" value="CHIT_BIND_RR_1"/>
    <property type="match status" value="1"/>
</dbReference>
<dbReference type="PROSITE" id="PS51155">
    <property type="entry name" value="CHIT_BIND_RR_2"/>
    <property type="match status" value="1"/>
</dbReference>
<organism>
    <name type="scientific">Lonomia obliqua</name>
    <name type="common">Moth</name>
    <dbReference type="NCBI Taxonomy" id="304329"/>
    <lineage>
        <taxon>Eukaryota</taxon>
        <taxon>Metazoa</taxon>
        <taxon>Ecdysozoa</taxon>
        <taxon>Arthropoda</taxon>
        <taxon>Hexapoda</taxon>
        <taxon>Insecta</taxon>
        <taxon>Pterygota</taxon>
        <taxon>Neoptera</taxon>
        <taxon>Endopterygota</taxon>
        <taxon>Lepidoptera</taxon>
        <taxon>Glossata</taxon>
        <taxon>Ditrysia</taxon>
        <taxon>Bombycoidea</taxon>
        <taxon>Saturniidae</taxon>
        <taxon>Hemileucinae</taxon>
        <taxon>Lonomia</taxon>
    </lineage>
</organism>
<feature type="signal peptide" evidence="3">
    <location>
        <begin position="1"/>
        <end position="16"/>
    </location>
</feature>
<feature type="chain" id="PRO_0000296381" description="Cuticle protein 3" evidence="1">
    <location>
        <begin position="17"/>
        <end position="180"/>
    </location>
</feature>
<feature type="domain" description="Chitin-binding type R&amp;R" evidence="2">
    <location>
        <begin position="58"/>
        <end position="121"/>
    </location>
</feature>
<keyword id="KW-0193">Cuticle</keyword>
<keyword id="KW-0903">Direct protein sequencing</keyword>
<keyword id="KW-0732">Signal</keyword>
<proteinExistence type="evidence at protein level"/>
<name>CU03_LONON</name>
<protein>
    <recommendedName>
        <fullName evidence="4">Cuticle protein 3</fullName>
    </recommendedName>
</protein>
<reference evidence="5 6" key="1">
    <citation type="journal article" date="2008" name="Toxicon">
        <title>Immunochemical and proteomic technologies as tools for unravelling toxins involved in envenoming by accidental contact with Lonomia obliqua caterpillars.</title>
        <authorList>
            <person name="Ricci-Silva M.E."/>
            <person name="Valente R.H."/>
            <person name="Leon I.R."/>
            <person name="Tambourgi D.V."/>
            <person name="Ramos O.H.P."/>
            <person name="Perales J."/>
            <person name="Chudzinski-Tavassi A.M."/>
        </authorList>
    </citation>
    <scope>NUCLEOTIDE SEQUENCE [GENOMIC DNA]</scope>
    <scope>PROTEIN SEQUENCE OF 17-28; 39-72 AND 137-152</scope>
    <source>
        <tissue evidence="3">Larval bristle</tissue>
    </source>
</reference>
<evidence type="ECO:0000255" key="1"/>
<evidence type="ECO:0000255" key="2">
    <source>
        <dbReference type="PROSITE-ProRule" id="PRU00497"/>
    </source>
</evidence>
<evidence type="ECO:0000269" key="3">
    <source>
    </source>
</evidence>
<evidence type="ECO:0000303" key="4">
    <source>
    </source>
</evidence>
<evidence type="ECO:0000305" key="5"/>
<evidence type="ECO:0000312" key="6">
    <source>
        <dbReference type="EMBL" id="ABU88846.1"/>
    </source>
</evidence>